<dbReference type="EMBL" id="AE016877">
    <property type="protein sequence ID" value="AAP10758.1"/>
    <property type="molecule type" value="Genomic_DNA"/>
</dbReference>
<dbReference type="RefSeq" id="NP_833557.1">
    <property type="nucleotide sequence ID" value="NC_004722.1"/>
</dbReference>
<dbReference type="RefSeq" id="WP_000236704.1">
    <property type="nucleotide sequence ID" value="NZ_CP138336.1"/>
</dbReference>
<dbReference type="SMR" id="Q819W8"/>
<dbReference type="STRING" id="226900.BC_3836"/>
<dbReference type="KEGG" id="bce:BC3836"/>
<dbReference type="PATRIC" id="fig|226900.8.peg.3955"/>
<dbReference type="HOGENOM" id="CLU_011106_1_0_9"/>
<dbReference type="OrthoDB" id="9779790at2"/>
<dbReference type="Proteomes" id="UP000001417">
    <property type="component" value="Chromosome"/>
</dbReference>
<dbReference type="GO" id="GO:0005737">
    <property type="term" value="C:cytoplasm"/>
    <property type="evidence" value="ECO:0007669"/>
    <property type="project" value="UniProtKB-SubCell"/>
</dbReference>
<dbReference type="GO" id="GO:0005525">
    <property type="term" value="F:GTP binding"/>
    <property type="evidence" value="ECO:0007669"/>
    <property type="project" value="UniProtKB-KW"/>
</dbReference>
<dbReference type="GO" id="GO:0003924">
    <property type="term" value="F:GTPase activity"/>
    <property type="evidence" value="ECO:0000318"/>
    <property type="project" value="GO_Central"/>
</dbReference>
<dbReference type="GO" id="GO:0003723">
    <property type="term" value="F:RNA binding"/>
    <property type="evidence" value="ECO:0007669"/>
    <property type="project" value="UniProtKB-KW"/>
</dbReference>
<dbReference type="GO" id="GO:0042254">
    <property type="term" value="P:ribosome biogenesis"/>
    <property type="evidence" value="ECO:0007669"/>
    <property type="project" value="UniProtKB-KW"/>
</dbReference>
<dbReference type="GO" id="GO:0006412">
    <property type="term" value="P:translation"/>
    <property type="evidence" value="ECO:0000318"/>
    <property type="project" value="GO_Central"/>
</dbReference>
<dbReference type="CDD" id="cd01856">
    <property type="entry name" value="YlqF"/>
    <property type="match status" value="1"/>
</dbReference>
<dbReference type="FunFam" id="1.10.1580.10:FF:000003">
    <property type="entry name" value="Ribosome biogenesis GTPase A"/>
    <property type="match status" value="1"/>
</dbReference>
<dbReference type="FunFam" id="3.40.50.300:FF:000590">
    <property type="entry name" value="Ribosome biogenesis GTPase A"/>
    <property type="match status" value="1"/>
</dbReference>
<dbReference type="Gene3D" id="1.10.1580.10">
    <property type="match status" value="1"/>
</dbReference>
<dbReference type="Gene3D" id="3.40.50.300">
    <property type="entry name" value="P-loop containing nucleotide triphosphate hydrolases"/>
    <property type="match status" value="1"/>
</dbReference>
<dbReference type="InterPro" id="IPR030378">
    <property type="entry name" value="G_CP_dom"/>
</dbReference>
<dbReference type="InterPro" id="IPR006073">
    <property type="entry name" value="GTP-bd"/>
</dbReference>
<dbReference type="InterPro" id="IPR023179">
    <property type="entry name" value="GTP-bd_ortho_bundle_sf"/>
</dbReference>
<dbReference type="InterPro" id="IPR019991">
    <property type="entry name" value="GTP-bd_ribosome_bgen"/>
</dbReference>
<dbReference type="InterPro" id="IPR016478">
    <property type="entry name" value="GTPase_MTG1"/>
</dbReference>
<dbReference type="InterPro" id="IPR027417">
    <property type="entry name" value="P-loop_NTPase"/>
</dbReference>
<dbReference type="NCBIfam" id="TIGR03596">
    <property type="entry name" value="GTPase_YlqF"/>
    <property type="match status" value="1"/>
</dbReference>
<dbReference type="PANTHER" id="PTHR45782">
    <property type="entry name" value="MITOCHONDRIAL RIBOSOME-ASSOCIATED GTPASE 1"/>
    <property type="match status" value="1"/>
</dbReference>
<dbReference type="PANTHER" id="PTHR45782:SF4">
    <property type="entry name" value="MITOCHONDRIAL RIBOSOME-ASSOCIATED GTPASE 1"/>
    <property type="match status" value="1"/>
</dbReference>
<dbReference type="Pfam" id="PF01926">
    <property type="entry name" value="MMR_HSR1"/>
    <property type="match status" value="1"/>
</dbReference>
<dbReference type="PIRSF" id="PIRSF006230">
    <property type="entry name" value="MG442"/>
    <property type="match status" value="1"/>
</dbReference>
<dbReference type="SUPFAM" id="SSF52540">
    <property type="entry name" value="P-loop containing nucleoside triphosphate hydrolases"/>
    <property type="match status" value="1"/>
</dbReference>
<dbReference type="PROSITE" id="PS51721">
    <property type="entry name" value="G_CP"/>
    <property type="match status" value="1"/>
</dbReference>
<evidence type="ECO:0000250" key="1">
    <source>
        <dbReference type="UniProtKB" id="O31743"/>
    </source>
</evidence>
<evidence type="ECO:0000255" key="2">
    <source>
        <dbReference type="PROSITE-ProRule" id="PRU01058"/>
    </source>
</evidence>
<evidence type="ECO:0000305" key="3"/>
<evidence type="ECO:0000312" key="4">
    <source>
        <dbReference type="EMBL" id="AAP10758.1"/>
    </source>
</evidence>
<keyword id="KW-0963">Cytoplasm</keyword>
<keyword id="KW-0342">GTP-binding</keyword>
<keyword id="KW-0378">Hydrolase</keyword>
<keyword id="KW-0547">Nucleotide-binding</keyword>
<keyword id="KW-1185">Reference proteome</keyword>
<keyword id="KW-0690">Ribosome biogenesis</keyword>
<keyword id="KW-0694">RNA-binding</keyword>
<sequence>MVIQWFPGHMAKARRQVTEKLKLIDVVIELVDARLPLSSRNPMIDEIITHKPRLVVLNKADMADDRLTKQWIAYFKEKGHMAISINAQAGQGMKEIAAACKVLVKEKFDKMVAKGIRPRAIRALIVGIPNVGKSTLINKLAKKNIAKTGDRPGVTTAQQWIKVGKEMELLDTPGILWPKFEDQLVGLRLATTGAIKDSILNLQDVAVYALRFMEKHYPERLKERYNLNEIPEDIVELFDAIGKNRGCLMGGGMIDYDKTSELVLRELRGGKLGKMTFETPEEFGEQVEDVEKIEEV</sequence>
<feature type="chain" id="PRO_0000409880" description="Ribosome biogenesis GTPase A">
    <location>
        <begin position="1"/>
        <end position="296"/>
    </location>
</feature>
<feature type="domain" description="CP-type G" evidence="2">
    <location>
        <begin position="14"/>
        <end position="178"/>
    </location>
</feature>
<feature type="binding site" evidence="1">
    <location>
        <begin position="58"/>
        <end position="61"/>
    </location>
    <ligand>
        <name>GTP</name>
        <dbReference type="ChEBI" id="CHEBI:37565"/>
    </ligand>
</feature>
<feature type="binding site" evidence="1">
    <location>
        <begin position="130"/>
        <end position="135"/>
    </location>
    <ligand>
        <name>GTP</name>
        <dbReference type="ChEBI" id="CHEBI:37565"/>
    </ligand>
</feature>
<feature type="binding site" evidence="1">
    <location>
        <position position="174"/>
    </location>
    <ligand>
        <name>GTP</name>
        <dbReference type="ChEBI" id="CHEBI:37565"/>
    </ligand>
</feature>
<accession>Q819W8</accession>
<organism>
    <name type="scientific">Bacillus cereus (strain ATCC 14579 / DSM 31 / CCUG 7414 / JCM 2152 / NBRC 15305 / NCIMB 9373 / NCTC 2599 / NRRL B-3711)</name>
    <dbReference type="NCBI Taxonomy" id="226900"/>
    <lineage>
        <taxon>Bacteria</taxon>
        <taxon>Bacillati</taxon>
        <taxon>Bacillota</taxon>
        <taxon>Bacilli</taxon>
        <taxon>Bacillales</taxon>
        <taxon>Bacillaceae</taxon>
        <taxon>Bacillus</taxon>
        <taxon>Bacillus cereus group</taxon>
    </lineage>
</organism>
<name>RBGA_BACCR</name>
<protein>
    <recommendedName>
        <fullName evidence="1">Ribosome biogenesis GTPase A</fullName>
    </recommendedName>
</protein>
<reference evidence="4" key="1">
    <citation type="journal article" date="2003" name="Nature">
        <title>Genome sequence of Bacillus cereus and comparative analysis with Bacillus anthracis.</title>
        <authorList>
            <person name="Ivanova N."/>
            <person name="Sorokin A."/>
            <person name="Anderson I."/>
            <person name="Galleron N."/>
            <person name="Candelon B."/>
            <person name="Kapatral V."/>
            <person name="Bhattacharyya A."/>
            <person name="Reznik G."/>
            <person name="Mikhailova N."/>
            <person name="Lapidus A."/>
            <person name="Chu L."/>
            <person name="Mazur M."/>
            <person name="Goltsman E."/>
            <person name="Larsen N."/>
            <person name="D'Souza M."/>
            <person name="Walunas T."/>
            <person name="Grechkin Y."/>
            <person name="Pusch G."/>
            <person name="Haselkorn R."/>
            <person name="Fonstein M."/>
            <person name="Ehrlich S.D."/>
            <person name="Overbeek R."/>
            <person name="Kyrpides N.C."/>
        </authorList>
    </citation>
    <scope>NUCLEOTIDE SEQUENCE [LARGE SCALE GENOMIC DNA]</scope>
    <source>
        <strain evidence="4">ATCC 14579 / DSM 31 / CCUG 7414 / JCM 2152 / NBRC 15305 / NCIMB 9373 / NCTC 2599 / NRRL B-3711</strain>
    </source>
</reference>
<comment type="function">
    <text evidence="1">Essential protein that is required for a late step of 50S ribosomal subunit assembly. Has GTPase activity that is stimulated by interaction with the immature 50S ribosome subunit. Binds to the 23S rRNA. Required for the association of ribosomal proteins rplP and rpmA with the large subunit (By similarity).</text>
</comment>
<comment type="subunit">
    <text evidence="1">Interacts with ctc. Interacts with the immature 50S ribosome subunit. 2 molecules of rbgA bind to one 50S subunit (By similarity).</text>
</comment>
<comment type="subcellular location">
    <subcellularLocation>
        <location evidence="1 3">Cytoplasm</location>
    </subcellularLocation>
</comment>
<comment type="similarity">
    <text evidence="2">Belongs to the TRAFAC class YlqF/YawG GTPase family. MTG1 subfamily.</text>
</comment>
<gene>
    <name evidence="1" type="primary">rbgA</name>
    <name evidence="1" type="synonym">ylqF</name>
    <name type="ordered locus">BC_3836</name>
</gene>
<proteinExistence type="inferred from homology"/>